<dbReference type="EMBL" id="X81593">
    <property type="protein sequence ID" value="CAA57279.1"/>
    <property type="molecule type" value="mRNA"/>
</dbReference>
<dbReference type="CCDS" id="CCDS25102.1"/>
<dbReference type="RefSeq" id="NP_032264.1">
    <property type="nucleotide sequence ID" value="NM_008238.2"/>
</dbReference>
<dbReference type="RefSeq" id="XP_006532327.2">
    <property type="nucleotide sequence ID" value="XM_006532264.3"/>
</dbReference>
<dbReference type="RefSeq" id="XP_006532329.1">
    <property type="nucleotide sequence ID" value="XM_006532266.5"/>
</dbReference>
<dbReference type="RefSeq" id="XP_017169774.1">
    <property type="nucleotide sequence ID" value="XM_017314285.1"/>
</dbReference>
<dbReference type="RefSeq" id="XP_017169775.1">
    <property type="nucleotide sequence ID" value="XM_017314286.2"/>
</dbReference>
<dbReference type="RefSeq" id="XP_017169776.1">
    <property type="nucleotide sequence ID" value="XM_017314287.1"/>
</dbReference>
<dbReference type="RefSeq" id="XP_017169777.1">
    <property type="nucleotide sequence ID" value="XM_017314288.1"/>
</dbReference>
<dbReference type="RefSeq" id="XP_017169778.1">
    <property type="nucleotide sequence ID" value="XM_017314289.3"/>
</dbReference>
<dbReference type="RefSeq" id="XP_017169779.1">
    <property type="nucleotide sequence ID" value="XM_017314290.1"/>
</dbReference>
<dbReference type="RefSeq" id="XP_017169780.1">
    <property type="nucleotide sequence ID" value="XM_017314291.2"/>
</dbReference>
<dbReference type="RefSeq" id="XP_017169781.1">
    <property type="nucleotide sequence ID" value="XM_017314292.2"/>
</dbReference>
<dbReference type="SMR" id="Q61575"/>
<dbReference type="FunCoup" id="Q61575">
    <property type="interactions" value="8"/>
</dbReference>
<dbReference type="STRING" id="10090.ENSMUSP00000103929"/>
<dbReference type="GlyGen" id="Q61575">
    <property type="glycosylation" value="1 site, 1 N-linked glycan (1 site)"/>
</dbReference>
<dbReference type="iPTMnet" id="Q61575"/>
<dbReference type="PhosphoSitePlus" id="Q61575"/>
<dbReference type="PaxDb" id="10090-ENSMUSP00000103929"/>
<dbReference type="ProteomicsDB" id="267400"/>
<dbReference type="Pumba" id="Q61575"/>
<dbReference type="Antibodypedia" id="14085">
    <property type="antibodies" value="262 antibodies from 35 providers"/>
</dbReference>
<dbReference type="DNASU" id="15218"/>
<dbReference type="Ensembl" id="ENSMUST00000108294.2">
    <property type="protein sequence ID" value="ENSMUSP00000103929.2"/>
    <property type="gene ID" value="ENSMUSG00000002057.5"/>
</dbReference>
<dbReference type="GeneID" id="15218"/>
<dbReference type="KEGG" id="mmu:15218"/>
<dbReference type="UCSC" id="uc007kjd.2">
    <property type="organism name" value="mouse"/>
</dbReference>
<dbReference type="AGR" id="MGI:102949"/>
<dbReference type="CTD" id="8456"/>
<dbReference type="MGI" id="MGI:102949">
    <property type="gene designation" value="Foxn1"/>
</dbReference>
<dbReference type="VEuPathDB" id="HostDB:ENSMUSG00000002057"/>
<dbReference type="eggNOG" id="KOG2294">
    <property type="taxonomic scope" value="Eukaryota"/>
</dbReference>
<dbReference type="GeneTree" id="ENSGT00940000158029"/>
<dbReference type="HOGENOM" id="CLU_031768_1_0_1"/>
<dbReference type="InParanoid" id="Q61575"/>
<dbReference type="OMA" id="PSCGMKM"/>
<dbReference type="OrthoDB" id="10070006at2759"/>
<dbReference type="PhylomeDB" id="Q61575"/>
<dbReference type="TreeFam" id="TF329867"/>
<dbReference type="BioGRID-ORCS" id="15218">
    <property type="hits" value="3 hits in 80 CRISPR screens"/>
</dbReference>
<dbReference type="ChiTaRS" id="Foxn1">
    <property type="organism name" value="mouse"/>
</dbReference>
<dbReference type="PRO" id="PR:Q61575"/>
<dbReference type="Proteomes" id="UP000000589">
    <property type="component" value="Chromosome 11"/>
</dbReference>
<dbReference type="RNAct" id="Q61575">
    <property type="molecule type" value="protein"/>
</dbReference>
<dbReference type="Bgee" id="ENSMUSG00000002057">
    <property type="expression patterns" value="Expressed in pharyngeal epithelium and 54 other cell types or tissues"/>
</dbReference>
<dbReference type="ExpressionAtlas" id="Q61575">
    <property type="expression patterns" value="baseline and differential"/>
</dbReference>
<dbReference type="GO" id="GO:0005634">
    <property type="term" value="C:nucleus"/>
    <property type="evidence" value="ECO:0007669"/>
    <property type="project" value="UniProtKB-SubCell"/>
</dbReference>
<dbReference type="GO" id="GO:0001228">
    <property type="term" value="F:DNA-binding transcription activator activity, RNA polymerase II-specific"/>
    <property type="evidence" value="ECO:0000314"/>
    <property type="project" value="NTNU_SB"/>
</dbReference>
<dbReference type="GO" id="GO:0043565">
    <property type="term" value="F:sequence-specific DNA binding"/>
    <property type="evidence" value="ECO:0000314"/>
    <property type="project" value="NTNU_SB"/>
</dbReference>
<dbReference type="GO" id="GO:0048514">
    <property type="term" value="P:blood vessel morphogenesis"/>
    <property type="evidence" value="ECO:0000315"/>
    <property type="project" value="UniProtKB"/>
</dbReference>
<dbReference type="GO" id="GO:0008544">
    <property type="term" value="P:epidermis development"/>
    <property type="evidence" value="ECO:0000315"/>
    <property type="project" value="MGI"/>
</dbReference>
<dbReference type="GO" id="GO:0001942">
    <property type="term" value="P:hair follicle development"/>
    <property type="evidence" value="ECO:0000315"/>
    <property type="project" value="MGI"/>
</dbReference>
<dbReference type="GO" id="GO:0030097">
    <property type="term" value="P:hemopoiesis"/>
    <property type="evidence" value="ECO:0000315"/>
    <property type="project" value="UniProtKB"/>
</dbReference>
<dbReference type="GO" id="GO:0030216">
    <property type="term" value="P:keratinocyte differentiation"/>
    <property type="evidence" value="ECO:0000314"/>
    <property type="project" value="MGI"/>
</dbReference>
<dbReference type="GO" id="GO:0002260">
    <property type="term" value="P:lymphocyte homeostasis"/>
    <property type="evidence" value="ECO:0000315"/>
    <property type="project" value="MGI"/>
</dbReference>
<dbReference type="GO" id="GO:0097535">
    <property type="term" value="P:lymphoid lineage cell migration into thymus"/>
    <property type="evidence" value="ECO:0000315"/>
    <property type="project" value="UniProtKB"/>
</dbReference>
<dbReference type="GO" id="GO:0035878">
    <property type="term" value="P:nail development"/>
    <property type="evidence" value="ECO:0000315"/>
    <property type="project" value="MGI"/>
</dbReference>
<dbReference type="GO" id="GO:0030858">
    <property type="term" value="P:positive regulation of epithelial cell differentiation"/>
    <property type="evidence" value="ECO:0007669"/>
    <property type="project" value="Ensembl"/>
</dbReference>
<dbReference type="GO" id="GO:0051798">
    <property type="term" value="P:positive regulation of hair follicle development"/>
    <property type="evidence" value="ECO:0000315"/>
    <property type="project" value="UniProtKB"/>
</dbReference>
<dbReference type="GO" id="GO:0045944">
    <property type="term" value="P:positive regulation of transcription by RNA polymerase II"/>
    <property type="evidence" value="ECO:0000315"/>
    <property type="project" value="NTNU_SB"/>
</dbReference>
<dbReference type="GO" id="GO:0010468">
    <property type="term" value="P:regulation of gene expression"/>
    <property type="evidence" value="ECO:0000315"/>
    <property type="project" value="MGI"/>
</dbReference>
<dbReference type="GO" id="GO:1902232">
    <property type="term" value="P:regulation of positive thymic T cell selection"/>
    <property type="evidence" value="ECO:0000315"/>
    <property type="project" value="UniProtKB"/>
</dbReference>
<dbReference type="GO" id="GO:0033081">
    <property type="term" value="P:regulation of T cell differentiation in thymus"/>
    <property type="evidence" value="ECO:0000315"/>
    <property type="project" value="MGI"/>
</dbReference>
<dbReference type="GO" id="GO:0043029">
    <property type="term" value="P:T cell homeostasis"/>
    <property type="evidence" value="ECO:0000315"/>
    <property type="project" value="UniProtKB"/>
</dbReference>
<dbReference type="GO" id="GO:0002360">
    <property type="term" value="P:T cell lineage commitment"/>
    <property type="evidence" value="ECO:0000315"/>
    <property type="project" value="UniProtKB"/>
</dbReference>
<dbReference type="GO" id="GO:0048538">
    <property type="term" value="P:thymus development"/>
    <property type="evidence" value="ECO:0000315"/>
    <property type="project" value="MGI"/>
</dbReference>
<dbReference type="GO" id="GO:0097536">
    <property type="term" value="P:thymus epithelium morphogenesis"/>
    <property type="evidence" value="ECO:0000315"/>
    <property type="project" value="UniProtKB"/>
</dbReference>
<dbReference type="CDD" id="cd20056">
    <property type="entry name" value="FH_FOXN1"/>
    <property type="match status" value="1"/>
</dbReference>
<dbReference type="FunFam" id="1.10.10.10:FF:000122">
    <property type="entry name" value="Forkhead box protein N1"/>
    <property type="match status" value="1"/>
</dbReference>
<dbReference type="Gene3D" id="1.10.10.10">
    <property type="entry name" value="Winged helix-like DNA-binding domain superfamily/Winged helix DNA-binding domain"/>
    <property type="match status" value="1"/>
</dbReference>
<dbReference type="InterPro" id="IPR047401">
    <property type="entry name" value="FH_FOXN1"/>
</dbReference>
<dbReference type="InterPro" id="IPR001766">
    <property type="entry name" value="Fork_head_dom"/>
</dbReference>
<dbReference type="InterPro" id="IPR049624">
    <property type="entry name" value="FOXN1_4"/>
</dbReference>
<dbReference type="InterPro" id="IPR030456">
    <property type="entry name" value="TF_fork_head_CS_2"/>
</dbReference>
<dbReference type="InterPro" id="IPR036388">
    <property type="entry name" value="WH-like_DNA-bd_sf"/>
</dbReference>
<dbReference type="InterPro" id="IPR036390">
    <property type="entry name" value="WH_DNA-bd_sf"/>
</dbReference>
<dbReference type="PANTHER" id="PTHR46721">
    <property type="entry name" value="FORKHEAD BOX PROTEIN N1"/>
    <property type="match status" value="1"/>
</dbReference>
<dbReference type="PANTHER" id="PTHR46721:SF1">
    <property type="entry name" value="FORKHEAD BOX PROTEIN N1"/>
    <property type="match status" value="1"/>
</dbReference>
<dbReference type="Pfam" id="PF00250">
    <property type="entry name" value="Forkhead"/>
    <property type="match status" value="1"/>
</dbReference>
<dbReference type="PRINTS" id="PR00053">
    <property type="entry name" value="FORKHEAD"/>
</dbReference>
<dbReference type="SMART" id="SM00339">
    <property type="entry name" value="FH"/>
    <property type="match status" value="1"/>
</dbReference>
<dbReference type="SUPFAM" id="SSF46785">
    <property type="entry name" value="Winged helix' DNA-binding domain"/>
    <property type="match status" value="1"/>
</dbReference>
<dbReference type="PROSITE" id="PS00658">
    <property type="entry name" value="FORK_HEAD_2"/>
    <property type="match status" value="1"/>
</dbReference>
<dbReference type="PROSITE" id="PS50039">
    <property type="entry name" value="FORK_HEAD_3"/>
    <property type="match status" value="1"/>
</dbReference>
<name>FOXN1_MOUSE</name>
<protein>
    <recommendedName>
        <fullName>Forkhead box protein N1</fullName>
    </recommendedName>
    <alternativeName>
        <fullName>Hepatocyte nuclear factor 3 forkhead homolog 11</fullName>
        <shortName>HFH-11</shortName>
        <shortName>HNF-3/forkhead homolog 11</shortName>
    </alternativeName>
    <alternativeName>
        <fullName>Winged-helix transcription factor nude</fullName>
    </alternativeName>
</protein>
<gene>
    <name type="primary">Foxn1</name>
    <name type="synonym">Fkh19</name>
    <name type="synonym">Hfh11</name>
    <name type="synonym">Whn</name>
</gene>
<comment type="function">
    <text evidence="3 4 5 6 7 9">Transcriptional regulator which regulates the development, differentiation, and function of thymic epithelial cells (TECs) both in the prenatal and postnatal thymus. Acts as a master regulator of the TECs lineage development and is required from the onset of differentiation in progenitor TECs in the developing fetus to the final differentiation steps through which TECs mature to acquire their full functionality. Regulates, either directly or indirectly the expression of a variety of genes that mediate diverse aspects of thymus development and function, including MHC Class II, DLL4, CCL25, CTSL, CD40 and PAX1. Regulates the differentiation of the immature TECs into functional cortical TECs (cTECs) and medullary TECs (mTECs) (PubMed:22072979). Essential for maintenance of mTECs population in the postnatal thymus (PubMed:19955175). Involved in the morphogenesis and maintenance of the three-dimensional thymic microstructure which is necessary for a fully functional thymus (PubMed:21109991). Plays an important role in the maintenance of hematopoiesis and particularly T lineage progenitors within the bone marrow niche with age (PubMed:24184560). Essential for the vascularization of the thymus anlage (PubMed:19853842). Promotes the terminal differentiation of epithelial cells in the epidermis and hair follicles, partly by negatively regulating the activity of protein kinase C (PubMed:17459087).</text>
</comment>
<comment type="subcellular location">
    <subcellularLocation>
        <location>Nucleus</location>
    </subcellularLocation>
</comment>
<comment type="tissue specificity">
    <text evidence="9">Bone marrow (at protein level). Expressed in thymus and skin.</text>
</comment>
<comment type="disease">
    <text evidence="8 10">Defects in FOXN1 are the cause of the nude/severe combined immunodeficiency (SCID) phenotype which is characterized by athymia and hairlessness. Mice develop largely normal hair follicles and produce hair shafts. However, presumably because of a lack of certain hair keratins, the hair shafts that are generated twist and coil in the hair follicle infundibulum, which becomes dilated. Since hair shafts fail to penetrate the epidermis, macroscopic nudity results and generates the grossly misleading impression that nude mice are hairless.</text>
</comment>
<comment type="disruption phenotype">
    <text evidence="5 6 7">Mice exhibit nude skin phenotype and acute thymic atrophy with a severe early block in thymic epithelial cells (TECs) differentiation. A more severe deterioration seen in medullary thymic epithelial cells (mTECs) than in cortical thymic epithelial cells (cTECs).</text>
</comment>
<keyword id="KW-0217">Developmental protein</keyword>
<keyword id="KW-0221">Differentiation</keyword>
<keyword id="KW-0238">DNA-binding</keyword>
<keyword id="KW-0539">Nucleus</keyword>
<keyword id="KW-1185">Reference proteome</keyword>
<keyword id="KW-0804">Transcription</keyword>
<keyword id="KW-0805">Transcription regulation</keyword>
<proteinExistence type="evidence at protein level"/>
<reference key="1">
    <citation type="journal article" date="1994" name="Nature">
        <title>New member of the winged-helix protein family disrupted in mouse and rat nude mutations.</title>
        <authorList>
            <person name="Nehls M."/>
            <person name="Pfeifer D."/>
            <person name="Schorpp M."/>
            <person name="Hedrich H."/>
            <person name="Boehm T."/>
        </authorList>
    </citation>
    <scope>NUCLEOTIDE SEQUENCE [MRNA]</scope>
    <scope>INVOLVEMENT IN NUDE PHENOTYPE</scope>
    <source>
        <strain>BALB/cJ</strain>
        <tissue>Skin</tissue>
    </source>
</reference>
<reference key="2">
    <citation type="journal article" date="1997" name="Immunogenetics">
        <title>Characterization of mouse and human nude genes.</title>
        <authorList>
            <person name="Schorpp M."/>
            <person name="Hofmann M."/>
            <person name="Dear T.N."/>
            <person name="Boehm T."/>
        </authorList>
    </citation>
    <scope>NUCLEOTIDE SEQUENCE [MRNA]</scope>
    <source>
        <strain>BALB/cJ</strain>
        <tissue>Skin</tissue>
        <tissue>Thymus</tissue>
    </source>
</reference>
<reference key="3">
    <citation type="journal article" date="1990" name="Cells Tissues Organs">
        <title>Nude mice are not hairless. A morphological study.</title>
        <authorList>
            <person name="Kopf-Maier P."/>
            <person name="Mboneko V.F."/>
            <person name="Merker H.J."/>
        </authorList>
    </citation>
    <scope>INVOLVEMENT IN NUDE PHENOTYPE</scope>
</reference>
<reference key="4">
    <citation type="journal article" date="2005" name="Exp. Dermatol.">
        <title>Learning from nudity: lessons from the nude phenotype.</title>
        <authorList>
            <person name="Mecklenburg L."/>
            <person name="Tychsen B."/>
            <person name="Paus R."/>
        </authorList>
    </citation>
    <scope>REVIEW</scope>
</reference>
<reference key="5">
    <citation type="journal article" date="2007" name="Differentiation">
        <title>Foxn1 promotes keratinocyte differentiation by regulating the activity of protein kinase C.</title>
        <authorList>
            <person name="Li J."/>
            <person name="Baxter R.M."/>
            <person name="Weiner L."/>
            <person name="Goetinck P.F."/>
            <person name="Calautti E."/>
            <person name="Brissette J.L."/>
        </authorList>
    </citation>
    <scope>FUNCTION</scope>
</reference>
<reference key="6">
    <citation type="journal article" date="2010" name="Cell. Immunol.">
        <title>Foxn1 is essential for vascularization of the murine thymus anlage.</title>
        <authorList>
            <person name="Mori K."/>
            <person name="Itoi M."/>
            <person name="Tsukamoto N."/>
            <person name="Amagai T."/>
        </authorList>
    </citation>
    <scope>FUNCTION</scope>
</reference>
<reference key="7">
    <citation type="journal article" date="2010" name="J. Biol. Chem.">
        <title>Postnatal tissue-specific disruption of transcription factor FoxN1 triggers acute thymic atrophy.</title>
        <authorList>
            <person name="Cheng L."/>
            <person name="Guo J."/>
            <person name="Sun L."/>
            <person name="Fu J."/>
            <person name="Barnes P.F."/>
            <person name="Metzger D."/>
            <person name="Chambon P."/>
            <person name="Oshima R.G."/>
            <person name="Amagai T."/>
            <person name="Su D.M."/>
        </authorList>
    </citation>
    <scope>FUNCTION</scope>
    <scope>DISRUPTION PHENOTYPE</scope>
</reference>
<reference key="8">
    <citation type="journal article" date="2011" name="J. Mol. Med.">
        <title>Morphogenesis and maintenance of the 3D thymic medulla and prevention of nude skin phenotype require FoxN1 in pre- and post-natal K14 epithelium.</title>
        <authorList>
            <person name="Guo J."/>
            <person name="Rahman M."/>
            <person name="Cheng L."/>
            <person name="Zhang S."/>
            <person name="Tvinnereim A."/>
            <person name="Su D.M."/>
        </authorList>
    </citation>
    <scope>FUNCTION</scope>
    <scope>DISRUPTION PHENOTYPE</scope>
</reference>
<reference key="9">
    <citation type="journal article" date="2011" name="PLoS Genet.">
        <title>Foxn1 regulates lineage progression in cortical and medullary thymic epithelial cells but is dispensable for medullary sublineage divergence.</title>
        <authorList>
            <person name="Nowell C.S."/>
            <person name="Bredenkamp N."/>
            <person name="Tetelin S."/>
            <person name="Jin X."/>
            <person name="Tischner C."/>
            <person name="Vaidya H."/>
            <person name="Sheridan J.M."/>
            <person name="Stenhouse F.H."/>
            <person name="Heussen R."/>
            <person name="Smith A.J."/>
            <person name="Blackburn C.C."/>
        </authorList>
    </citation>
    <scope>FUNCTION</scope>
    <scope>DISRUPTION PHENOTYPE</scope>
</reference>
<reference key="10">
    <citation type="journal article" date="2012" name="Int. J. Biol. Sci.">
        <title>Insights on FoxN1 biological significance and usages of the 'nude' mouse in studies of T-lymphopoiesis.</title>
        <authorList>
            <person name="Zhang Z."/>
            <person name="Burnley P."/>
            <person name="Coder B."/>
            <person name="Su D.M."/>
        </authorList>
    </citation>
    <scope>REVIEW</scope>
</reference>
<reference key="11">
    <citation type="journal article" date="2013" name="Front. Immunol.">
        <title>FOXN1: a master regulator gene of thymic epithelial development program.</title>
        <authorList>
            <person name="Romano R."/>
            <person name="Palamaro L."/>
            <person name="Fusco A."/>
            <person name="Giardino G."/>
            <person name="Gallo V."/>
            <person name="Del Vecchio L."/>
            <person name="Pignata C."/>
        </authorList>
    </citation>
    <scope>REVIEW</scope>
</reference>
<reference key="12">
    <citation type="journal article" date="2013" name="J. Immunol.">
        <title>Enhancing T lineage production in aged mice: a novel function of Foxn1 in the bone marrow niche.</title>
        <authorList>
            <person name="Zook E.C."/>
            <person name="Zhang S."/>
            <person name="Gerstein R.M."/>
            <person name="Witte P.L."/>
            <person name="Le P.T."/>
        </authorList>
    </citation>
    <scope>FUNCTION</scope>
    <scope>TISSUE SPECIFICITY</scope>
</reference>
<accession>Q61575</accession>
<sequence length="648" mass="69245">MVSLLPPQSDVTLPGSTRLEGEPQGDLMQAPGLPDSPAPQNKHANFSCSSFVPDGPPERTPSLPPHSPSIASPDPEQIQGHCTAGPGPGSFRLSPSEKYPGFGFEEGPAGSPGRFLKGNHMPFHPYKRHFHEDIFSEAQTAMALDGHSFKTQGALEAFEEIPVDMGDAEAFLPSFPAEAWCNKLPYPSQEHNQILQGSEVKVKPQALDSGPGMYCYQPPLQHMYCSSQPAFHQYSPGGGSYPVPYLGSPHYPYQRIAPQANAEGHQPLFPKPIYSYSILIFMALKNSKTGSLPVSEIYNFMTEHFPYFKTAPDGWKNSVRHNLSLNKCFEKVENKSGSSSRKGCLWALNPSKIDKMQEELQKWKRKDPIAVRKSMAKPEELDSLIGDKREKLGSPLLGCPPPGLAGPGPIRPMAPSAGLSQPLHPMHPAPGPMPGKNPLQDLLGGHAPSCYGQTYPHLSPSLAPSGHQQPLFPQPDGHLELQAQPGTPQDSPLPAHTPPSHGAKLMAEPSSARTMHDTLLPDGDLGTDLDAINPSLTDFDFQGNLWEQLKDDSLALDPLVLVTSSPTSSSMLPPPPAAHCFPPGPCLAETGNEAGELAPPGSGGSGALGDMHLSTLYSAFVELESTPSSAAAGPAVYLSPGSKPLALA</sequence>
<feature type="chain" id="PRO_0000091867" description="Forkhead box protein N1">
    <location>
        <begin position="1"/>
        <end position="648"/>
    </location>
</feature>
<feature type="DNA-binding region" description="Fork-head" evidence="1">
    <location>
        <begin position="271"/>
        <end position="367"/>
    </location>
</feature>
<feature type="region of interest" description="Disordered" evidence="2">
    <location>
        <begin position="1"/>
        <end position="95"/>
    </location>
</feature>
<feature type="region of interest" description="Disordered" evidence="2">
    <location>
        <begin position="392"/>
        <end position="432"/>
    </location>
</feature>
<feature type="region of interest" description="Disordered" evidence="2">
    <location>
        <begin position="457"/>
        <end position="521"/>
    </location>
</feature>
<feature type="region of interest" description="Disordered" evidence="2">
    <location>
        <begin position="629"/>
        <end position="648"/>
    </location>
</feature>
<feature type="compositionally biased region" description="Polar residues" evidence="2">
    <location>
        <begin position="38"/>
        <end position="50"/>
    </location>
</feature>
<feature type="compositionally biased region" description="Pro residues" evidence="2">
    <location>
        <begin position="54"/>
        <end position="67"/>
    </location>
</feature>
<feature type="compositionally biased region" description="Pro residues" evidence="2">
    <location>
        <begin position="398"/>
        <end position="412"/>
    </location>
</feature>
<evidence type="ECO:0000255" key="1">
    <source>
        <dbReference type="PROSITE-ProRule" id="PRU00089"/>
    </source>
</evidence>
<evidence type="ECO:0000256" key="2">
    <source>
        <dbReference type="SAM" id="MobiDB-lite"/>
    </source>
</evidence>
<evidence type="ECO:0000269" key="3">
    <source>
    </source>
</evidence>
<evidence type="ECO:0000269" key="4">
    <source>
    </source>
</evidence>
<evidence type="ECO:0000269" key="5">
    <source>
    </source>
</evidence>
<evidence type="ECO:0000269" key="6">
    <source>
    </source>
</evidence>
<evidence type="ECO:0000269" key="7">
    <source>
    </source>
</evidence>
<evidence type="ECO:0000269" key="8">
    <source>
    </source>
</evidence>
<evidence type="ECO:0000269" key="9">
    <source>
    </source>
</evidence>
<evidence type="ECO:0000269" key="10">
    <source>
    </source>
</evidence>
<organism>
    <name type="scientific">Mus musculus</name>
    <name type="common">Mouse</name>
    <dbReference type="NCBI Taxonomy" id="10090"/>
    <lineage>
        <taxon>Eukaryota</taxon>
        <taxon>Metazoa</taxon>
        <taxon>Chordata</taxon>
        <taxon>Craniata</taxon>
        <taxon>Vertebrata</taxon>
        <taxon>Euteleostomi</taxon>
        <taxon>Mammalia</taxon>
        <taxon>Eutheria</taxon>
        <taxon>Euarchontoglires</taxon>
        <taxon>Glires</taxon>
        <taxon>Rodentia</taxon>
        <taxon>Myomorpha</taxon>
        <taxon>Muroidea</taxon>
        <taxon>Muridae</taxon>
        <taxon>Murinae</taxon>
        <taxon>Mus</taxon>
        <taxon>Mus</taxon>
    </lineage>
</organism>